<name>PDRP_STAA9</name>
<sequence length="272" mass="30785">MEKIKIIVASDSIGETAELVARAGISQFNPKQCKNELLRYPYIESFEDVDEVIQVAKDTNAIIVYTLIKPEMKQYMSEKVAEFQLKSVDIMGPLMDLLSASVEEKPYNEPGIVHRLDDAYFKKIDAIEFAVKYDDGKDPKGLPKADIVLLGISRTSKTPLSQYLAHKSYKVMNVPIVPEVTPPDGLYDIDPKKCIALKISEEKLNRIRKERLKQLGLGDTARYATEARIQEELNYFEEIVSEIGCPVIDVSQKAIEETANDIIHYIEQNKSK</sequence>
<comment type="function">
    <text evidence="1">Bifunctional serine/threonine kinase and phosphorylase involved in the regulation of the pyruvate, phosphate dikinase (PPDK) by catalyzing its phosphorylation/dephosphorylation.</text>
</comment>
<comment type="catalytic activity">
    <reaction evidence="1">
        <text>N(tele)-phospho-L-histidyl/L-threonyl-[pyruvate, phosphate dikinase] + ADP = N(tele)-phospho-L-histidyl/O-phospho-L-threonyl-[pyruvate, phosphate dikinase] + AMP + H(+)</text>
        <dbReference type="Rhea" id="RHEA:43692"/>
        <dbReference type="Rhea" id="RHEA-COMP:10650"/>
        <dbReference type="Rhea" id="RHEA-COMP:10651"/>
        <dbReference type="ChEBI" id="CHEBI:15378"/>
        <dbReference type="ChEBI" id="CHEBI:30013"/>
        <dbReference type="ChEBI" id="CHEBI:61977"/>
        <dbReference type="ChEBI" id="CHEBI:83586"/>
        <dbReference type="ChEBI" id="CHEBI:456215"/>
        <dbReference type="ChEBI" id="CHEBI:456216"/>
        <dbReference type="EC" id="2.7.11.32"/>
    </reaction>
</comment>
<comment type="catalytic activity">
    <reaction evidence="1">
        <text>N(tele)-phospho-L-histidyl/O-phospho-L-threonyl-[pyruvate, phosphate dikinase] + phosphate + H(+) = N(tele)-phospho-L-histidyl/L-threonyl-[pyruvate, phosphate dikinase] + diphosphate</text>
        <dbReference type="Rhea" id="RHEA:43696"/>
        <dbReference type="Rhea" id="RHEA-COMP:10650"/>
        <dbReference type="Rhea" id="RHEA-COMP:10651"/>
        <dbReference type="ChEBI" id="CHEBI:15378"/>
        <dbReference type="ChEBI" id="CHEBI:30013"/>
        <dbReference type="ChEBI" id="CHEBI:33019"/>
        <dbReference type="ChEBI" id="CHEBI:43474"/>
        <dbReference type="ChEBI" id="CHEBI:61977"/>
        <dbReference type="ChEBI" id="CHEBI:83586"/>
        <dbReference type="EC" id="2.7.4.27"/>
    </reaction>
</comment>
<comment type="similarity">
    <text evidence="1">Belongs to the pyruvate, phosphate/water dikinase regulatory protein family. PDRP subfamily.</text>
</comment>
<proteinExistence type="inferred from homology"/>
<reference key="1">
    <citation type="submission" date="2007-05" db="EMBL/GenBank/DDBJ databases">
        <title>Complete sequence of chromosome of Staphylococcus aureus subsp. aureus JH9.</title>
        <authorList>
            <consortium name="US DOE Joint Genome Institute"/>
            <person name="Copeland A."/>
            <person name="Lucas S."/>
            <person name="Lapidus A."/>
            <person name="Barry K."/>
            <person name="Detter J.C."/>
            <person name="Glavina del Rio T."/>
            <person name="Hammon N."/>
            <person name="Israni S."/>
            <person name="Pitluck S."/>
            <person name="Chain P."/>
            <person name="Malfatti S."/>
            <person name="Shin M."/>
            <person name="Vergez L."/>
            <person name="Schmutz J."/>
            <person name="Larimer F."/>
            <person name="Land M."/>
            <person name="Hauser L."/>
            <person name="Kyrpides N."/>
            <person name="Kim E."/>
            <person name="Tomasz A."/>
            <person name="Richardson P."/>
        </authorList>
    </citation>
    <scope>NUCLEOTIDE SEQUENCE [LARGE SCALE GENOMIC DNA]</scope>
    <source>
        <strain>JH9</strain>
    </source>
</reference>
<evidence type="ECO:0000255" key="1">
    <source>
        <dbReference type="HAMAP-Rule" id="MF_00921"/>
    </source>
</evidence>
<gene>
    <name type="ordered locus">SaurJH9_1621</name>
</gene>
<protein>
    <recommendedName>
        <fullName evidence="1">Putative pyruvate, phosphate dikinase regulatory protein</fullName>
        <shortName evidence="1">PPDK regulatory protein</shortName>
        <ecNumber evidence="1">2.7.11.32</ecNumber>
        <ecNumber evidence="1">2.7.4.27</ecNumber>
    </recommendedName>
</protein>
<dbReference type="EC" id="2.7.11.32" evidence="1"/>
<dbReference type="EC" id="2.7.4.27" evidence="1"/>
<dbReference type="EMBL" id="CP000703">
    <property type="protein sequence ID" value="ABQ49414.1"/>
    <property type="molecule type" value="Genomic_DNA"/>
</dbReference>
<dbReference type="RefSeq" id="WP_000411298.1">
    <property type="nucleotide sequence ID" value="NC_009487.1"/>
</dbReference>
<dbReference type="SMR" id="A5IT91"/>
<dbReference type="KEGG" id="saj:SaurJH9_1621"/>
<dbReference type="HOGENOM" id="CLU_046206_2_1_9"/>
<dbReference type="GO" id="GO:0043531">
    <property type="term" value="F:ADP binding"/>
    <property type="evidence" value="ECO:0007669"/>
    <property type="project" value="UniProtKB-UniRule"/>
</dbReference>
<dbReference type="GO" id="GO:0005524">
    <property type="term" value="F:ATP binding"/>
    <property type="evidence" value="ECO:0007669"/>
    <property type="project" value="InterPro"/>
</dbReference>
<dbReference type="GO" id="GO:0016776">
    <property type="term" value="F:phosphotransferase activity, phosphate group as acceptor"/>
    <property type="evidence" value="ECO:0007669"/>
    <property type="project" value="UniProtKB-UniRule"/>
</dbReference>
<dbReference type="GO" id="GO:0004674">
    <property type="term" value="F:protein serine/threonine kinase activity"/>
    <property type="evidence" value="ECO:0007669"/>
    <property type="project" value="UniProtKB-UniRule"/>
</dbReference>
<dbReference type="HAMAP" id="MF_00921">
    <property type="entry name" value="PDRP"/>
    <property type="match status" value="1"/>
</dbReference>
<dbReference type="InterPro" id="IPR005177">
    <property type="entry name" value="Kinase-pyrophosphorylase"/>
</dbReference>
<dbReference type="InterPro" id="IPR026565">
    <property type="entry name" value="PPDK_reg"/>
</dbReference>
<dbReference type="NCBIfam" id="NF003742">
    <property type="entry name" value="PRK05339.1"/>
    <property type="match status" value="1"/>
</dbReference>
<dbReference type="PANTHER" id="PTHR31756">
    <property type="entry name" value="PYRUVATE, PHOSPHATE DIKINASE REGULATORY PROTEIN 1, CHLOROPLASTIC"/>
    <property type="match status" value="1"/>
</dbReference>
<dbReference type="PANTHER" id="PTHR31756:SF3">
    <property type="entry name" value="PYRUVATE, PHOSPHATE DIKINASE REGULATORY PROTEIN 1, CHLOROPLASTIC"/>
    <property type="match status" value="1"/>
</dbReference>
<dbReference type="Pfam" id="PF03618">
    <property type="entry name" value="Kinase-PPPase"/>
    <property type="match status" value="1"/>
</dbReference>
<accession>A5IT91</accession>
<organism>
    <name type="scientific">Staphylococcus aureus (strain JH9)</name>
    <dbReference type="NCBI Taxonomy" id="359786"/>
    <lineage>
        <taxon>Bacteria</taxon>
        <taxon>Bacillati</taxon>
        <taxon>Bacillota</taxon>
        <taxon>Bacilli</taxon>
        <taxon>Bacillales</taxon>
        <taxon>Staphylococcaceae</taxon>
        <taxon>Staphylococcus</taxon>
    </lineage>
</organism>
<feature type="chain" id="PRO_1000084478" description="Putative pyruvate, phosphate dikinase regulatory protein">
    <location>
        <begin position="1"/>
        <end position="272"/>
    </location>
</feature>
<feature type="binding site" evidence="1">
    <location>
        <begin position="151"/>
        <end position="158"/>
    </location>
    <ligand>
        <name>ADP</name>
        <dbReference type="ChEBI" id="CHEBI:456216"/>
    </ligand>
</feature>
<keyword id="KW-0418">Kinase</keyword>
<keyword id="KW-0547">Nucleotide-binding</keyword>
<keyword id="KW-0723">Serine/threonine-protein kinase</keyword>
<keyword id="KW-0808">Transferase</keyword>